<comment type="function">
    <text evidence="1 2">Prenyltransferase; part of the gene cluster that mediates the biosynthesis of phenalenones such as herqueinone, compounds that have been reported to treat tumors, bacterial infections and/or mycoses, and rheumatic diseases (PubMed:26978228). The non-reducing polyketide synthase phnA synthesizes the heptaketide backbone and cyclizes it into the angular, hemiketal-containing naphtho-gamma-pyrone prephenalenone. The product template (PT) domain of phnA catalyzes only the C4-C9 aldol condensation, which is unprecedented among known PT domains (PubMed:26978228, PubMed:28240554). The transformation of prephenalenone to phenalenones requires an FAD-dependent monooxygenase phnB, which catalyzes the C2 aromatic hydroxylation of prephenalenone and ring opening of the gamma-pyrone ring simultaneously (PubMed:26978228, PubMed:28240554). Subsequent intramolecular deprotonation of C3 phenolic oxygen accelerates phenalenone ring closure to yield the tricyclic phenalenone core with a C2 hydroxylation (PubMed:26978228, PubMed:28240554). The prenyltransferase phnF further catalyzes reverse C-prenylation of phenalenone by direct electrophilic substitution at C6, or possibly via first a forward O-prenylation of a neighboring phenol in phenalenone, followed by a Claisen rearrangement (PubMed:28240554). The hydroalkoxylation enzyme phnH catalyzes the 5-exo-trig cyclization via acid catalysis after the spontaneous deprotonation of 7-OH, which leads to the formation of the dihydrobenzofuran atrovenetin (PubMed:28240554). Atrovenetin is further converted to deoxyherqueinone by the O-methyltransferase phnC which can methylate C2-OH to stabilize the northern portion of the phenalenone core (PubMed:28240554). Finally, the oxidoreductase phnG converts deoxyherqueinone to herqueinone via C6 hydroxylation (PubMed:28240554).</text>
</comment>
<comment type="catalytic activity">
    <reaction evidence="2">
        <text>2,3,4,7,9-pentahydroxy-6-methyl-1H-phenalen-1-one + dimethylallyl diphosphate = 2,4,7,9-tetrahydroxy-6-methyl-8-(2-methylbut-3-en-2-yl)-1-oxo-1H-phenalen-3-ol + diphosphate</text>
        <dbReference type="Rhea" id="RHEA:62656"/>
        <dbReference type="ChEBI" id="CHEBI:33019"/>
        <dbReference type="ChEBI" id="CHEBI:57623"/>
        <dbReference type="ChEBI" id="CHEBI:142788"/>
        <dbReference type="ChEBI" id="CHEBI:145870"/>
    </reaction>
    <physiologicalReaction direction="left-to-right" evidence="2">
        <dbReference type="Rhea" id="RHEA:62657"/>
    </physiologicalReaction>
</comment>
<comment type="pathway">
    <text evidence="2">Secondary metabolite biosynthesis.</text>
</comment>
<comment type="disruption phenotype">
    <text evidence="2">Impairs the production of herqueinone, but accumulates phenalenone.</text>
</comment>
<comment type="similarity">
    <text evidence="4">Belongs to the tryptophan dimethylallyltransferase family.</text>
</comment>
<sequence>MSAPTQTTPVFKALTEASFSDSSLSEEAKQNALYWWNTSANDLARMLHQADYSEEVQRGFLSYYRDNICPRLGGKPDKDSADSGVGWDGNPLEYSFELKGSTKKKSVRFVVDLTELRPADHSNPLSMKHTQEMVDLLAEKTPNFDDTWYKVLKNWFVYAHLTPEEQTALIAKAGQQTSVIIGFDIYPKLTSPDQLPVMGKVYFPPCYVASDKGISRWQAVRQGIQSLPGVESFPNILSSTEIINDYLSEKPDSWQMGTRYLATDLVSPNKARFKVYMRCFDTSFEGIWDYYTLGGRIPNLDEDREKFRQLMDLVSGTTYAETRSKDDMQMGRFTSATGKLTAIYFNISPDNPYPAPKLCIYPSNFAKDDEVIAKGLDEWLEKYGWSDDTKSMEDQVKSVFDHRKLEETTGIFTFIGIGRKEDPTKKELSIQVYMTPELYRTPRY</sequence>
<feature type="chain" id="PRO_0000446164" description="Prenyltransferase phnF">
    <location>
        <begin position="1"/>
        <end position="444"/>
    </location>
</feature>
<gene>
    <name evidence="3" type="primary">phnF</name>
</gene>
<accession>A0A142C7A4</accession>
<evidence type="ECO:0000269" key="1">
    <source>
    </source>
</evidence>
<evidence type="ECO:0000269" key="2">
    <source>
    </source>
</evidence>
<evidence type="ECO:0000303" key="3">
    <source>
    </source>
</evidence>
<evidence type="ECO:0000305" key="4"/>
<evidence type="ECO:0000305" key="5">
    <source>
    </source>
</evidence>
<keyword id="KW-0808">Transferase</keyword>
<protein>
    <recommendedName>
        <fullName evidence="3">Prenyltransferase phnF</fullName>
        <ecNumber evidence="5">2.5.1.-</ecNumber>
    </recommendedName>
    <alternativeName>
        <fullName evidence="3">Phenalenone biosynthesis cluster protein F</fullName>
    </alternativeName>
</protein>
<dbReference type="EC" id="2.5.1.-" evidence="5"/>
<dbReference type="EMBL" id="KU641631">
    <property type="protein sequence ID" value="AMP46756.1"/>
    <property type="molecule type" value="Genomic_DNA"/>
</dbReference>
<dbReference type="SMR" id="A0A142C7A4"/>
<dbReference type="GO" id="GO:0016765">
    <property type="term" value="F:transferase activity, transferring alkyl or aryl (other than methyl) groups"/>
    <property type="evidence" value="ECO:0007669"/>
    <property type="project" value="InterPro"/>
</dbReference>
<dbReference type="GO" id="GO:0009820">
    <property type="term" value="P:alkaloid metabolic process"/>
    <property type="evidence" value="ECO:0007669"/>
    <property type="project" value="InterPro"/>
</dbReference>
<dbReference type="CDD" id="cd13929">
    <property type="entry name" value="PT-DMATS_CymD"/>
    <property type="match status" value="1"/>
</dbReference>
<dbReference type="InterPro" id="IPR033964">
    <property type="entry name" value="Aro_prenylTrfase"/>
</dbReference>
<dbReference type="InterPro" id="IPR017795">
    <property type="entry name" value="Aro_prenylTrfase_DMATS"/>
</dbReference>
<dbReference type="NCBIfam" id="TIGR03429">
    <property type="entry name" value="arom_pren_DMATS"/>
    <property type="match status" value="1"/>
</dbReference>
<dbReference type="PANTHER" id="PTHR40627">
    <property type="entry name" value="INDOLE PRENYLTRANSFERASE TDIB-RELATED"/>
    <property type="match status" value="1"/>
</dbReference>
<dbReference type="PANTHER" id="PTHR40627:SF4">
    <property type="entry name" value="PRENYLTRANSFERASE ASQH1-RELATED"/>
    <property type="match status" value="1"/>
</dbReference>
<dbReference type="Pfam" id="PF11991">
    <property type="entry name" value="Trp_DMAT"/>
    <property type="match status" value="1"/>
</dbReference>
<dbReference type="SFLD" id="SFLDS00036">
    <property type="entry name" value="Aromatic_Prenyltransferase"/>
    <property type="match status" value="1"/>
</dbReference>
<dbReference type="SFLD" id="SFLDG01162">
    <property type="entry name" value="I"/>
    <property type="match status" value="1"/>
</dbReference>
<reference key="1">
    <citation type="journal article" date="2016" name="J. Am. Chem. Soc.">
        <title>Phenalenone polyketide cyclization catalyzed by fungal polyketide synthase and flavin-dependent monooxygenase.</title>
        <authorList>
            <person name="Gao S.S."/>
            <person name="Duan A."/>
            <person name="Xu W."/>
            <person name="Yu P."/>
            <person name="Hang L."/>
            <person name="Houk K.N."/>
            <person name="Tang Y."/>
        </authorList>
    </citation>
    <scope>NUCLEOTIDE SEQUENCE [GENOMIC DNA]</scope>
    <scope>FUNCTION</scope>
    <source>
        <strain>ATCC 10118 / CBS 336.48 / NBRC 31747 / NRRL 1040</strain>
    </source>
</reference>
<reference key="2">
    <citation type="journal article" date="2017" name="J. Am. Chem. Soc.">
        <title>Enzyme-catalyzed intramolecular enantioselective hydroalkoxylation.</title>
        <authorList>
            <person name="Gao S.S."/>
            <person name="Garcia-Borras M."/>
            <person name="Barber J.S."/>
            <person name="Hai Y."/>
            <person name="Duan A."/>
            <person name="Garg N.K."/>
            <person name="Houk K.N."/>
            <person name="Tang Y."/>
        </authorList>
    </citation>
    <scope>FUNCTION</scope>
    <scope>CATALYTIC ACTIVITY</scope>
    <scope>DISRUPTION PHENOTYPE</scope>
    <scope>PATHWAY</scope>
</reference>
<name>PHNF_PENHR</name>
<proteinExistence type="evidence at protein level"/>
<organism>
    <name type="scientific">Penicillium herquei</name>
    <dbReference type="NCBI Taxonomy" id="69774"/>
    <lineage>
        <taxon>Eukaryota</taxon>
        <taxon>Fungi</taxon>
        <taxon>Dikarya</taxon>
        <taxon>Ascomycota</taxon>
        <taxon>Pezizomycotina</taxon>
        <taxon>Eurotiomycetes</taxon>
        <taxon>Eurotiomycetidae</taxon>
        <taxon>Eurotiales</taxon>
        <taxon>Aspergillaceae</taxon>
        <taxon>Penicillium</taxon>
    </lineage>
</organism>